<feature type="chain" id="PRO_0000100738" description="POU domain, class 4, transcription factor 1">
    <location>
        <begin position="1"/>
        <end position="420"/>
    </location>
</feature>
<feature type="domain" description="POU-specific" evidence="3">
    <location>
        <begin position="261"/>
        <end position="338"/>
    </location>
</feature>
<feature type="DNA-binding region" description="Homeobox" evidence="2">
    <location>
        <begin position="356"/>
        <end position="415"/>
    </location>
</feature>
<feature type="region of interest" description="Disordered" evidence="4">
    <location>
        <begin position="94"/>
        <end position="117"/>
    </location>
</feature>
<feature type="region of interest" description="Disordered" evidence="4">
    <location>
        <begin position="132"/>
        <end position="200"/>
    </location>
</feature>
<feature type="short sequence motif" description="POU-IV box">
    <location>
        <begin position="57"/>
        <end position="66"/>
    </location>
</feature>
<feature type="compositionally biased region" description="Basic residues" evidence="4">
    <location>
        <begin position="99"/>
        <end position="108"/>
    </location>
</feature>
<feature type="compositionally biased region" description="Gly residues" evidence="4">
    <location>
        <begin position="132"/>
        <end position="165"/>
    </location>
</feature>
<feature type="compositionally biased region" description="Gly residues" evidence="4">
    <location>
        <begin position="172"/>
        <end position="184"/>
    </location>
</feature>
<feature type="splice variant" id="VSP_058638" description="In isoform 2." evidence="9">
    <location>
        <begin position="1"/>
        <end position="84"/>
    </location>
</feature>
<feature type="sequence conflict" description="In Ref. 1." evidence="10" ref="1">
    <original>A</original>
    <variation>P</variation>
    <location>
        <position position="340"/>
    </location>
</feature>
<protein>
    <recommendedName>
        <fullName>POU domain, class 4, transcription factor 1</fullName>
    </recommendedName>
    <alternativeName>
        <fullName>Brain-specific homeobox/POU domain protein 3A</fullName>
        <shortName>Brain-3A</shortName>
        <shortName>Brn-3A</shortName>
    </alternativeName>
</protein>
<accession>P20266</accession>
<accession>Q91XM4</accession>
<sequence>MMSMNSKQPHFAMHPTLPEHKYPSLHSSSEAIRRACLPTPPLQSNLFASLDETLLARAEALAAVDIAVSQGKSHPFKPDATYHTMNSVPCTSTSTVPLAHHHHHHHHHQALEPGDLLDHISSPSLALMAGAGGAGAAGGGGAPTRPRGAGGPGGGGGPGGGGPGVAGRRRGPGGGGGGPGGGLLGXSAHPHPHMHGXGHLSHPAAAAAMNMPSGLPHPGLVAAAAHHGAAAAAAAAAAGQVAAASAAAAVVGAAGLASICDSDTDPRELEAFAERFKQRRIKLGVTQADVGSALANLKIPGVGSLSQSTICRFESLTLSHNNMIALKPILQAWLEEAEGAQREKMNKPELFNGGEKKRKRTSIAAPEKRSLEAYFAVQPRPSSEKIAAIAEKLDLKKNVVRVWFCNQRQKQKRMKFSATY</sequence>
<keyword id="KW-0025">Alternative splicing</keyword>
<keyword id="KW-0963">Cytoplasm</keyword>
<keyword id="KW-0217">Developmental protein</keyword>
<keyword id="KW-0238">DNA-binding</keyword>
<keyword id="KW-0371">Homeobox</keyword>
<keyword id="KW-0539">Nucleus</keyword>
<keyword id="KW-1185">Reference proteome</keyword>
<keyword id="KW-0804">Transcription</keyword>
<keyword id="KW-0805">Transcription regulation</keyword>
<organism>
    <name type="scientific">Rattus norvegicus</name>
    <name type="common">Rat</name>
    <dbReference type="NCBI Taxonomy" id="10116"/>
    <lineage>
        <taxon>Eukaryota</taxon>
        <taxon>Metazoa</taxon>
        <taxon>Chordata</taxon>
        <taxon>Craniata</taxon>
        <taxon>Vertebrata</taxon>
        <taxon>Euteleostomi</taxon>
        <taxon>Mammalia</taxon>
        <taxon>Eutheria</taxon>
        <taxon>Euarchontoglires</taxon>
        <taxon>Glires</taxon>
        <taxon>Rodentia</taxon>
        <taxon>Myomorpha</taxon>
        <taxon>Muroidea</taxon>
        <taxon>Muridae</taxon>
        <taxon>Murinae</taxon>
        <taxon>Rattus</taxon>
    </lineage>
</organism>
<dbReference type="EMBL" id="AF390075">
    <property type="protein sequence ID" value="AAK70502.1"/>
    <property type="molecule type" value="mRNA"/>
</dbReference>
<dbReference type="PIR" id="S05045">
    <property type="entry name" value="S05045"/>
</dbReference>
<dbReference type="RefSeq" id="XP_008769153.1">
    <property type="nucleotide sequence ID" value="XM_008770931.2"/>
</dbReference>
<dbReference type="FunCoup" id="P20266">
    <property type="interactions" value="456"/>
</dbReference>
<dbReference type="MINT" id="P20266"/>
<dbReference type="STRING" id="10116.ENSRNOP00000074614"/>
<dbReference type="GlyGen" id="P20266">
    <property type="glycosylation" value="1 site"/>
</dbReference>
<dbReference type="PhosphoSitePlus" id="P20266"/>
<dbReference type="UCSC" id="RGD:620074">
    <molecule id="P20266-1"/>
    <property type="organism name" value="rat"/>
</dbReference>
<dbReference type="AGR" id="RGD:620074"/>
<dbReference type="RGD" id="620074">
    <property type="gene designation" value="Pou4f1"/>
</dbReference>
<dbReference type="eggNOG" id="KOG1168">
    <property type="taxonomic scope" value="Eukaryota"/>
</dbReference>
<dbReference type="InParanoid" id="P20266"/>
<dbReference type="Reactome" id="R-RNO-6804759">
    <property type="pathway name" value="Regulation of TP53 Activity through Association with Co-factors"/>
</dbReference>
<dbReference type="PRO" id="PR:P20266"/>
<dbReference type="Proteomes" id="UP000002494">
    <property type="component" value="Unplaced"/>
</dbReference>
<dbReference type="GO" id="GO:0000785">
    <property type="term" value="C:chromatin"/>
    <property type="evidence" value="ECO:0000266"/>
    <property type="project" value="RGD"/>
</dbReference>
<dbReference type="GO" id="GO:0005737">
    <property type="term" value="C:cytoplasm"/>
    <property type="evidence" value="ECO:0000250"/>
    <property type="project" value="UniProtKB"/>
</dbReference>
<dbReference type="GO" id="GO:0043005">
    <property type="term" value="C:neuron projection"/>
    <property type="evidence" value="ECO:0000266"/>
    <property type="project" value="RGD"/>
</dbReference>
<dbReference type="GO" id="GO:0005634">
    <property type="term" value="C:nucleus"/>
    <property type="evidence" value="ECO:0000250"/>
    <property type="project" value="UniProtKB"/>
</dbReference>
<dbReference type="GO" id="GO:0090575">
    <property type="term" value="C:RNA polymerase II transcription regulator complex"/>
    <property type="evidence" value="ECO:0000266"/>
    <property type="project" value="RGD"/>
</dbReference>
<dbReference type="GO" id="GO:0003682">
    <property type="term" value="F:chromatin binding"/>
    <property type="evidence" value="ECO:0000266"/>
    <property type="project" value="RGD"/>
</dbReference>
<dbReference type="GO" id="GO:0003677">
    <property type="term" value="F:DNA binding"/>
    <property type="evidence" value="ECO:0000266"/>
    <property type="project" value="RGD"/>
</dbReference>
<dbReference type="GO" id="GO:0001228">
    <property type="term" value="F:DNA-binding transcription activator activity, RNA polymerase II-specific"/>
    <property type="evidence" value="ECO:0000250"/>
    <property type="project" value="GO_Central"/>
</dbReference>
<dbReference type="GO" id="GO:0003700">
    <property type="term" value="F:DNA-binding transcription factor activity"/>
    <property type="evidence" value="ECO:0000266"/>
    <property type="project" value="RGD"/>
</dbReference>
<dbReference type="GO" id="GO:0000981">
    <property type="term" value="F:DNA-binding transcription factor activity, RNA polymerase II-specific"/>
    <property type="evidence" value="ECO:0000266"/>
    <property type="project" value="RGD"/>
</dbReference>
<dbReference type="GO" id="GO:0001227">
    <property type="term" value="F:DNA-binding transcription repressor activity, RNA polymerase II-specific"/>
    <property type="evidence" value="ECO:0000266"/>
    <property type="project" value="RGD"/>
</dbReference>
<dbReference type="GO" id="GO:0051020">
    <property type="term" value="F:GTPase binding"/>
    <property type="evidence" value="ECO:0000266"/>
    <property type="project" value="RGD"/>
</dbReference>
<dbReference type="GO" id="GO:0000978">
    <property type="term" value="F:RNA polymerase II cis-regulatory region sequence-specific DNA binding"/>
    <property type="evidence" value="ECO:0000266"/>
    <property type="project" value="RGD"/>
</dbReference>
<dbReference type="GO" id="GO:0061629">
    <property type="term" value="F:RNA polymerase II-specific DNA-binding transcription factor binding"/>
    <property type="evidence" value="ECO:0000353"/>
    <property type="project" value="ARUK-UCL"/>
</dbReference>
<dbReference type="GO" id="GO:0043565">
    <property type="term" value="F:sequence-specific DNA binding"/>
    <property type="evidence" value="ECO:0000250"/>
    <property type="project" value="UniProtKB"/>
</dbReference>
<dbReference type="GO" id="GO:1990837">
    <property type="term" value="F:sequence-specific double-stranded DNA binding"/>
    <property type="evidence" value="ECO:0000266"/>
    <property type="project" value="RGD"/>
</dbReference>
<dbReference type="GO" id="GO:0003697">
    <property type="term" value="F:single-stranded DNA binding"/>
    <property type="evidence" value="ECO:0000250"/>
    <property type="project" value="UniProtKB"/>
</dbReference>
<dbReference type="GO" id="GO:0021535">
    <property type="term" value="P:cell migration in hindbrain"/>
    <property type="evidence" value="ECO:0000266"/>
    <property type="project" value="RGD"/>
</dbReference>
<dbReference type="GO" id="GO:0071345">
    <property type="term" value="P:cellular response to cytokine stimulus"/>
    <property type="evidence" value="ECO:0000250"/>
    <property type="project" value="UniProtKB"/>
</dbReference>
<dbReference type="GO" id="GO:0071392">
    <property type="term" value="P:cellular response to estradiol stimulus"/>
    <property type="evidence" value="ECO:0000250"/>
    <property type="project" value="UniProtKB"/>
</dbReference>
<dbReference type="GO" id="GO:0021953">
    <property type="term" value="P:central nervous system neuron differentiation"/>
    <property type="evidence" value="ECO:0000266"/>
    <property type="project" value="RGD"/>
</dbReference>
<dbReference type="GO" id="GO:0021986">
    <property type="term" value="P:habenula development"/>
    <property type="evidence" value="ECO:0000266"/>
    <property type="project" value="RGD"/>
</dbReference>
<dbReference type="GO" id="GO:0007507">
    <property type="term" value="P:heart development"/>
    <property type="evidence" value="ECO:0000266"/>
    <property type="project" value="RGD"/>
</dbReference>
<dbReference type="GO" id="GO:0060384">
    <property type="term" value="P:innervation"/>
    <property type="evidence" value="ECO:0000266"/>
    <property type="project" value="RGD"/>
</dbReference>
<dbReference type="GO" id="GO:0072332">
    <property type="term" value="P:intrinsic apoptotic signaling pathway by p53 class mediator"/>
    <property type="evidence" value="ECO:0000250"/>
    <property type="project" value="UniProtKB"/>
</dbReference>
<dbReference type="GO" id="GO:0007498">
    <property type="term" value="P:mesoderm development"/>
    <property type="evidence" value="ECO:0000266"/>
    <property type="project" value="RGD"/>
</dbReference>
<dbReference type="GO" id="GO:0043066">
    <property type="term" value="P:negative regulation of apoptotic process"/>
    <property type="evidence" value="ECO:0000266"/>
    <property type="project" value="RGD"/>
</dbReference>
<dbReference type="GO" id="GO:0010629">
    <property type="term" value="P:negative regulation of gene expression"/>
    <property type="evidence" value="ECO:0000266"/>
    <property type="project" value="RGD"/>
</dbReference>
<dbReference type="GO" id="GO:0043524">
    <property type="term" value="P:negative regulation of neuron apoptotic process"/>
    <property type="evidence" value="ECO:0000315"/>
    <property type="project" value="RGD"/>
</dbReference>
<dbReference type="GO" id="GO:0043069">
    <property type="term" value="P:negative regulation of programmed cell death"/>
    <property type="evidence" value="ECO:0000250"/>
    <property type="project" value="UniProtKB"/>
</dbReference>
<dbReference type="GO" id="GO:0000122">
    <property type="term" value="P:negative regulation of transcription by RNA polymerase II"/>
    <property type="evidence" value="ECO:0000266"/>
    <property type="project" value="RGD"/>
</dbReference>
<dbReference type="GO" id="GO:0007399">
    <property type="term" value="P:nervous system development"/>
    <property type="evidence" value="ECO:0000266"/>
    <property type="project" value="RGD"/>
</dbReference>
<dbReference type="GO" id="GO:0051402">
    <property type="term" value="P:neuron apoptotic process"/>
    <property type="evidence" value="ECO:0000266"/>
    <property type="project" value="RGD"/>
</dbReference>
<dbReference type="GO" id="GO:0030182">
    <property type="term" value="P:neuron differentiation"/>
    <property type="evidence" value="ECO:0000266"/>
    <property type="project" value="RGD"/>
</dbReference>
<dbReference type="GO" id="GO:0048665">
    <property type="term" value="P:neuron fate specification"/>
    <property type="evidence" value="ECO:0000266"/>
    <property type="project" value="RGD"/>
</dbReference>
<dbReference type="GO" id="GO:0001764">
    <property type="term" value="P:neuron migration"/>
    <property type="evidence" value="ECO:0000266"/>
    <property type="project" value="RGD"/>
</dbReference>
<dbReference type="GO" id="GO:0031175">
    <property type="term" value="P:neuron projection development"/>
    <property type="evidence" value="ECO:0000250"/>
    <property type="project" value="UniProtKB"/>
</dbReference>
<dbReference type="GO" id="GO:0048935">
    <property type="term" value="P:peripheral nervous system neuron development"/>
    <property type="evidence" value="ECO:0000266"/>
    <property type="project" value="RGD"/>
</dbReference>
<dbReference type="GO" id="GO:0048934">
    <property type="term" value="P:peripheral nervous system neuron differentiation"/>
    <property type="evidence" value="ECO:0000266"/>
    <property type="project" value="RGD"/>
</dbReference>
<dbReference type="GO" id="GO:0010628">
    <property type="term" value="P:positive regulation of gene expression"/>
    <property type="evidence" value="ECO:0000250"/>
    <property type="project" value="UniProtKB"/>
</dbReference>
<dbReference type="GO" id="GO:0043525">
    <property type="term" value="P:positive regulation of neuron apoptotic process"/>
    <property type="evidence" value="ECO:0000266"/>
    <property type="project" value="RGD"/>
</dbReference>
<dbReference type="GO" id="GO:0045672">
    <property type="term" value="P:positive regulation of osteoclast differentiation"/>
    <property type="evidence" value="ECO:0000250"/>
    <property type="project" value="UniProtKB"/>
</dbReference>
<dbReference type="GO" id="GO:0045944">
    <property type="term" value="P:positive regulation of transcription by RNA polymerase II"/>
    <property type="evidence" value="ECO:0000266"/>
    <property type="project" value="RGD"/>
</dbReference>
<dbReference type="GO" id="GO:2000679">
    <property type="term" value="P:positive regulation of transcription regulatory region DNA binding"/>
    <property type="evidence" value="ECO:0000250"/>
    <property type="project" value="UniProtKB"/>
</dbReference>
<dbReference type="GO" id="GO:0051355">
    <property type="term" value="P:proprioception involved in equilibrioception"/>
    <property type="evidence" value="ECO:0000266"/>
    <property type="project" value="RGD"/>
</dbReference>
<dbReference type="GO" id="GO:0051726">
    <property type="term" value="P:regulation of cell cycle"/>
    <property type="evidence" value="ECO:0000250"/>
    <property type="project" value="UniProtKB"/>
</dbReference>
<dbReference type="GO" id="GO:0051090">
    <property type="term" value="P:regulation of DNA-binding transcription factor activity"/>
    <property type="evidence" value="ECO:0000250"/>
    <property type="project" value="UniProtKB"/>
</dbReference>
<dbReference type="GO" id="GO:0006355">
    <property type="term" value="P:regulation of DNA-templated transcription"/>
    <property type="evidence" value="ECO:0000266"/>
    <property type="project" value="RGD"/>
</dbReference>
<dbReference type="GO" id="GO:0050767">
    <property type="term" value="P:regulation of neurogenesis"/>
    <property type="evidence" value="ECO:0000266"/>
    <property type="project" value="RGD"/>
</dbReference>
<dbReference type="GO" id="GO:0006357">
    <property type="term" value="P:regulation of transcription by RNA polymerase II"/>
    <property type="evidence" value="ECO:0000318"/>
    <property type="project" value="GO_Central"/>
</dbReference>
<dbReference type="GO" id="GO:0048880">
    <property type="term" value="P:sensory system development"/>
    <property type="evidence" value="ECO:0000266"/>
    <property type="project" value="RGD"/>
</dbReference>
<dbReference type="GO" id="GO:0007283">
    <property type="term" value="P:spermatogenesis"/>
    <property type="evidence" value="ECO:0000270"/>
    <property type="project" value="RGD"/>
</dbReference>
<dbReference type="GO" id="GO:0001967">
    <property type="term" value="P:suckling behavior"/>
    <property type="evidence" value="ECO:0000266"/>
    <property type="project" value="RGD"/>
</dbReference>
<dbReference type="GO" id="GO:0006366">
    <property type="term" value="P:transcription by RNA polymerase II"/>
    <property type="evidence" value="ECO:0000304"/>
    <property type="project" value="RGD"/>
</dbReference>
<dbReference type="GO" id="GO:0021559">
    <property type="term" value="P:trigeminal nerve development"/>
    <property type="evidence" value="ECO:0000266"/>
    <property type="project" value="RGD"/>
</dbReference>
<dbReference type="GO" id="GO:0003223">
    <property type="term" value="P:ventricular compact myocardium morphogenesis"/>
    <property type="evidence" value="ECO:0000266"/>
    <property type="project" value="RGD"/>
</dbReference>
<dbReference type="CDD" id="cd00086">
    <property type="entry name" value="homeodomain"/>
    <property type="match status" value="1"/>
</dbReference>
<dbReference type="FunFam" id="1.10.10.60:FF:000056">
    <property type="entry name" value="POU domain protein"/>
    <property type="match status" value="1"/>
</dbReference>
<dbReference type="FunFam" id="1.10.260.40:FF:000007">
    <property type="entry name" value="POU domain protein"/>
    <property type="match status" value="1"/>
</dbReference>
<dbReference type="Gene3D" id="1.10.10.60">
    <property type="entry name" value="Homeodomain-like"/>
    <property type="match status" value="1"/>
</dbReference>
<dbReference type="Gene3D" id="1.10.260.40">
    <property type="entry name" value="lambda repressor-like DNA-binding domains"/>
    <property type="match status" value="1"/>
</dbReference>
<dbReference type="InterPro" id="IPR001356">
    <property type="entry name" value="HD"/>
</dbReference>
<dbReference type="InterPro" id="IPR017970">
    <property type="entry name" value="Homeobox_CS"/>
</dbReference>
<dbReference type="InterPro" id="IPR009057">
    <property type="entry name" value="Homeodomain-like_sf"/>
</dbReference>
<dbReference type="InterPro" id="IPR010982">
    <property type="entry name" value="Lambda_DNA-bd_dom_sf"/>
</dbReference>
<dbReference type="InterPro" id="IPR013847">
    <property type="entry name" value="POU"/>
</dbReference>
<dbReference type="InterPro" id="IPR000327">
    <property type="entry name" value="POU_dom"/>
</dbReference>
<dbReference type="InterPro" id="IPR050255">
    <property type="entry name" value="POU_domain_TF"/>
</dbReference>
<dbReference type="PANTHER" id="PTHR11636">
    <property type="entry name" value="POU DOMAIN"/>
    <property type="match status" value="1"/>
</dbReference>
<dbReference type="PANTHER" id="PTHR11636:SF42">
    <property type="entry name" value="POU DOMAIN, CLASS 4, TRANSCRIPTION FACTOR 1"/>
    <property type="match status" value="1"/>
</dbReference>
<dbReference type="Pfam" id="PF00046">
    <property type="entry name" value="Homeodomain"/>
    <property type="match status" value="1"/>
</dbReference>
<dbReference type="Pfam" id="PF00157">
    <property type="entry name" value="Pou"/>
    <property type="match status" value="1"/>
</dbReference>
<dbReference type="PRINTS" id="PR00028">
    <property type="entry name" value="POUDOMAIN"/>
</dbReference>
<dbReference type="SMART" id="SM00389">
    <property type="entry name" value="HOX"/>
    <property type="match status" value="1"/>
</dbReference>
<dbReference type="SMART" id="SM00352">
    <property type="entry name" value="POU"/>
    <property type="match status" value="1"/>
</dbReference>
<dbReference type="SUPFAM" id="SSF46689">
    <property type="entry name" value="Homeodomain-like"/>
    <property type="match status" value="1"/>
</dbReference>
<dbReference type="SUPFAM" id="SSF47413">
    <property type="entry name" value="lambda repressor-like DNA-binding domains"/>
    <property type="match status" value="1"/>
</dbReference>
<dbReference type="PROSITE" id="PS00027">
    <property type="entry name" value="HOMEOBOX_1"/>
    <property type="match status" value="1"/>
</dbReference>
<dbReference type="PROSITE" id="PS50071">
    <property type="entry name" value="HOMEOBOX_2"/>
    <property type="match status" value="1"/>
</dbReference>
<dbReference type="PROSITE" id="PS00035">
    <property type="entry name" value="POU_1"/>
    <property type="match status" value="1"/>
</dbReference>
<dbReference type="PROSITE" id="PS00465">
    <property type="entry name" value="POU_2"/>
    <property type="match status" value="1"/>
</dbReference>
<dbReference type="PROSITE" id="PS51179">
    <property type="entry name" value="POU_3"/>
    <property type="match status" value="1"/>
</dbReference>
<reference key="1">
    <citation type="journal article" date="1989" name="Nature">
        <title>Expression of a large family of POU-domain regulatory genes in mammalian brain development.</title>
        <authorList>
            <person name="He X."/>
            <person name="Treacy M.N."/>
            <person name="Simmons D.M."/>
            <person name="Ingraham H.A."/>
            <person name="Swanson L.W."/>
            <person name="Rosenfeld M.G."/>
        </authorList>
    </citation>
    <scope>NUCLEOTIDE SEQUENCE [MRNA] OF 279-406</scope>
    <scope>TISSUE SPECIFICITY</scope>
</reference>
<reference key="2">
    <citation type="journal article" date="1992" name="Nucleic Acids Res.">
        <title>A novel POU family transcription factor is closely related to Brn-3 but has a distinct expression pattern in neuronal cells.</title>
        <authorList>
            <person name="Lillycrop K.A."/>
            <person name="Budrahan V.S."/>
            <person name="Lakin N.D."/>
            <person name="Terrenghi G."/>
            <person name="Wood J.N."/>
            <person name="Polak J.M."/>
            <person name="Latchman D.S."/>
        </authorList>
    </citation>
    <scope>NUCLEOTIDE SEQUENCE [MRNA] OF 285-400</scope>
</reference>
<reference key="3">
    <citation type="journal article" date="2003" name="Neurosci. Res. Commun.">
        <title>Homeobox gene repertoire in adult rat dorsal root ganglia.</title>
        <authorList>
            <person name="Vogelaar C.F."/>
            <person name="Smits S.M."/>
            <person name="Brakkee J.H."/>
            <person name="Gispen W.H."/>
            <person name="Smidt M.P."/>
            <person name="Schrama L.H."/>
            <person name="Hoekman M.F.M."/>
            <person name="Burbach J.P.H."/>
        </authorList>
    </citation>
    <scope>NUCLEOTIDE SEQUENCE [MRNA] OF 329-401</scope>
</reference>
<reference key="4">
    <citation type="journal article" date="1996" name="J. Mol. Neurosci.">
        <title>Alternative splicing of the Brn-3a and Brn-3b transcription factor RNAs is regulated in neuronal cells.</title>
        <authorList>
            <person name="Liu Y.Z."/>
            <person name="Dawson S.J."/>
            <person name="Latchman D.S."/>
        </authorList>
    </citation>
    <scope>ALTERNATIVE SPLICING</scope>
    <scope>TISSUE SPECIFICITY</scope>
</reference>
<reference key="5">
    <citation type="journal article" date="1999" name="Brain Res. Mol. Brain Res.">
        <title>Regulation of NGFI-A (Egr-1) gene expression by the POU domain transcription factor Brn-3a.</title>
        <authorList>
            <person name="Smith M.D."/>
            <person name="Ensor E.A."/>
            <person name="Stohl L."/>
            <person name="Wagner J.A."/>
            <person name="Latchman D.S."/>
        </authorList>
    </citation>
    <scope>FUNCTION</scope>
</reference>
<reference key="6">
    <citation type="journal article" date="2001" name="J. Biol. Chem.">
        <title>The BRN-3A transcription factor protects sensory but not sympathetic neurons from programmed cell death/apoptosis.</title>
        <authorList>
            <person name="Ensor E."/>
            <person name="Smith M.D."/>
            <person name="Latchman D.S."/>
        </authorList>
    </citation>
    <scope>FUNCTION</scope>
</reference>
<gene>
    <name type="primary">Pou4f1</name>
    <name type="synonym">Brn-3</name>
    <name type="synonym">Brn3</name>
    <name type="synonym">Brn3a</name>
</gene>
<comment type="function">
    <text evidence="1 5 6">Multifunctional transcription factor with different regions mediating its different effects (PubMed:10640682). Acts by binding (via its C-terminal domain) to sequences related to the consensus octamer motif 5'-ATGCAAAT-3' in the regulatory regions of its target genes. Regulates the expression of specific genes involved in differentiation and survival within a subset of neuronal lineages (PubMed:11053412). It has been shown that activation of some of these genes requires its N-terminal domain, maybe through a neuronal-specific cofactor. Activates BCL2 expression and protects neuronal cells from apoptosis (via the N-terminal domain). Induces neuronal process outgrowth and the coordinate expression of genes encoding synaptic proteins. Exerts its major developmental effects in somatosensory neurons and in brainstem nuclei involved in motor control. Stimulates the binding affinity of the nuclear estrogene receptor ESR1 to DNA estrogen response element (ERE), and hence modulates ESR1-induced transcriptional activity. May positively regulate POU4F2 and POU4F3. Regulates dorsal root ganglion sensory neuron specification and axonal projection into the spinal cord. Plays a role in TNFSF11-mediated terminal osteoclast differentiation. Negatively regulates its own expression interacting directly with a highly conserved autoregulatory domain surrounding the transcription initiation site (By similarity).</text>
</comment>
<comment type="function">
    <molecule>Isoform 2</molecule>
    <text evidence="1">Able to act as transcription factor, cannot regulate the expression of the same subset of genes than isoform 1. Does not have anitapoptotic effect on neuronal cells.</text>
</comment>
<comment type="subunit">
    <text evidence="1">Interacts (via N-terminus) with RIT2; the interaction controls POU4F1 transactivation activity on some neuronal target genes. Isoform 1 interacts with POU4F2; this interaction inhibits both POU4F1 DNA-binding and transcriptional activities. Isoform 1 interacts (C-terminus) with ESR1 (via DNA-binding domain); this interaction decreases the estrogen receptor ESR1 transcriptional activity in a DNA- and ligand 17-beta-estradiol-independent manner.</text>
</comment>
<comment type="subcellular location">
    <subcellularLocation>
        <location evidence="1">Nucleus</location>
    </subcellularLocation>
    <subcellularLocation>
        <location evidence="1">Cytoplasm</location>
    </subcellularLocation>
</comment>
<comment type="alternative products">
    <event type="alternative splicing"/>
    <isoform>
        <id>P20266-1</id>
        <name evidence="9">1</name>
        <name evidence="9">Brn-3A-Long</name>
        <sequence type="displayed"/>
    </isoform>
    <isoform>
        <id>P20266-2</id>
        <name evidence="9">2</name>
        <name evidence="9">Brn-3A-Short</name>
        <sequence type="described" ref="VSP_058638"/>
    </isoform>
</comment>
<comment type="tissue specificity">
    <text evidence="7 8">Detected in brain, spinal cord and dorsal root ganglion (PubMed:2739723, PubMed:8835784). Isoform 2 is detected in brain, spinal cord, dorsal root ganglion and spleen (PubMed:8835784).</text>
</comment>
<comment type="domain">
    <text evidence="1">The C-terminal domain is able to act as both DNA-binding domain and a transcriptional activator. The N-terminal domain is also required for transactivation activity on some target genes acting as a discrete activation domain. Neurite outgrowth and expression of genes required for synapse formation are primarily dependent on the C-terminal domain, however the N-terminal domain is required for maximal induction.</text>
</comment>
<comment type="similarity">
    <text evidence="10">Belongs to the POU transcription factor family. Class-4 subfamily.</text>
</comment>
<proteinExistence type="evidence at transcript level"/>
<evidence type="ECO:0000250" key="1">
    <source>
        <dbReference type="UniProtKB" id="P17208"/>
    </source>
</evidence>
<evidence type="ECO:0000255" key="2">
    <source>
        <dbReference type="PROSITE-ProRule" id="PRU00108"/>
    </source>
</evidence>
<evidence type="ECO:0000255" key="3">
    <source>
        <dbReference type="PROSITE-ProRule" id="PRU00530"/>
    </source>
</evidence>
<evidence type="ECO:0000256" key="4">
    <source>
        <dbReference type="SAM" id="MobiDB-lite"/>
    </source>
</evidence>
<evidence type="ECO:0000269" key="5">
    <source>
    </source>
</evidence>
<evidence type="ECO:0000269" key="6">
    <source>
    </source>
</evidence>
<evidence type="ECO:0000269" key="7">
    <source>
    </source>
</evidence>
<evidence type="ECO:0000269" key="8">
    <source>
    </source>
</evidence>
<evidence type="ECO:0000303" key="9">
    <source>
    </source>
</evidence>
<evidence type="ECO:0000305" key="10"/>
<name>PO4F1_RAT</name>